<organism>
    <name type="scientific">Pseudomonas sp. (strain ACP)</name>
    <dbReference type="NCBI Taxonomy" id="74568"/>
    <lineage>
        <taxon>Bacteria</taxon>
        <taxon>Pseudomonadati</taxon>
        <taxon>Pseudomonadota</taxon>
    </lineage>
</organism>
<feature type="chain" id="PRO_0000184505" description="1-aminocyclopropane-1-carboxylate deaminase">
    <location>
        <begin position="1"/>
        <end position="338"/>
    </location>
</feature>
<feature type="active site" description="Nucleophile" evidence="1">
    <location>
        <position position="78"/>
    </location>
</feature>
<feature type="modified residue" description="N6-(pyridoxal phosphate)lysine">
    <location>
        <position position="51"/>
    </location>
</feature>
<feature type="helix" evidence="3">
    <location>
        <begin position="3"/>
        <end position="5"/>
    </location>
</feature>
<feature type="strand" evidence="3">
    <location>
        <begin position="12"/>
        <end position="15"/>
    </location>
</feature>
<feature type="strand" evidence="3">
    <location>
        <begin position="18"/>
        <end position="20"/>
    </location>
</feature>
<feature type="helix" evidence="3">
    <location>
        <begin position="22"/>
        <end position="27"/>
    </location>
</feature>
<feature type="strand" evidence="3">
    <location>
        <begin position="30"/>
        <end position="38"/>
    </location>
</feature>
<feature type="helix" evidence="3">
    <location>
        <begin position="39"/>
        <end position="41"/>
    </location>
</feature>
<feature type="helix" evidence="3">
    <location>
        <begin position="50"/>
        <end position="56"/>
    </location>
</feature>
<feature type="helix" evidence="3">
    <location>
        <begin position="59"/>
        <end position="64"/>
    </location>
</feature>
<feature type="strand" evidence="3">
    <location>
        <begin position="69"/>
        <end position="75"/>
    </location>
</feature>
<feature type="helix" evidence="3">
    <location>
        <begin position="79"/>
        <end position="91"/>
    </location>
</feature>
<feature type="strand" evidence="3">
    <location>
        <begin position="94"/>
        <end position="100"/>
    </location>
</feature>
<feature type="turn" evidence="3">
    <location>
        <begin position="108"/>
        <end position="112"/>
    </location>
</feature>
<feature type="helix" evidence="3">
    <location>
        <begin position="114"/>
        <end position="121"/>
    </location>
</feature>
<feature type="strand" evidence="3">
    <location>
        <begin position="125"/>
        <end position="128"/>
    </location>
</feature>
<feature type="helix" evidence="3">
    <location>
        <begin position="135"/>
        <end position="138"/>
    </location>
</feature>
<feature type="helix" evidence="3">
    <location>
        <begin position="140"/>
        <end position="150"/>
    </location>
</feature>
<feature type="strand" evidence="3">
    <location>
        <begin position="155"/>
        <end position="157"/>
    </location>
</feature>
<feature type="helix" evidence="3">
    <location>
        <begin position="160"/>
        <end position="162"/>
    </location>
</feature>
<feature type="turn" evidence="3">
    <location>
        <begin position="166"/>
        <end position="169"/>
    </location>
</feature>
<feature type="helix" evidence="3">
    <location>
        <begin position="171"/>
        <end position="186"/>
    </location>
</feature>
<feature type="strand" evidence="3">
    <location>
        <begin position="191"/>
        <end position="200"/>
    </location>
</feature>
<feature type="helix" evidence="3">
    <location>
        <begin position="201"/>
        <end position="211"/>
    </location>
</feature>
<feature type="turn" evidence="3">
    <location>
        <begin position="212"/>
        <end position="214"/>
    </location>
</feature>
<feature type="helix" evidence="3">
    <location>
        <begin position="216"/>
        <end position="218"/>
    </location>
</feature>
<feature type="strand" evidence="3">
    <location>
        <begin position="219"/>
        <end position="223"/>
    </location>
</feature>
<feature type="helix" evidence="3">
    <location>
        <begin position="228"/>
        <end position="246"/>
    </location>
</feature>
<feature type="helix" evidence="3">
    <location>
        <begin position="254"/>
        <end position="256"/>
    </location>
</feature>
<feature type="strand" evidence="3">
    <location>
        <begin position="258"/>
        <end position="260"/>
    </location>
</feature>
<feature type="helix" evidence="3">
    <location>
        <begin position="273"/>
        <end position="286"/>
    </location>
</feature>
<feature type="turn" evidence="3">
    <location>
        <begin position="292"/>
        <end position="294"/>
    </location>
</feature>
<feature type="helix" evidence="3">
    <location>
        <begin position="295"/>
        <end position="307"/>
    </location>
</feature>
<feature type="strand" evidence="3">
    <location>
        <begin position="316"/>
        <end position="321"/>
    </location>
</feature>
<feature type="helix" evidence="3">
    <location>
        <begin position="325"/>
        <end position="331"/>
    </location>
</feature>
<feature type="helix" evidence="3">
    <location>
        <begin position="333"/>
        <end position="335"/>
    </location>
</feature>
<proteinExistence type="evidence at protein level"/>
<protein>
    <recommendedName>
        <fullName evidence="1">1-aminocyclopropane-1-carboxylate deaminase</fullName>
        <shortName evidence="1">ACC deaminase</shortName>
        <shortName evidence="1">ACCD</shortName>
        <ecNumber evidence="1">3.5.99.7</ecNumber>
    </recommendedName>
</protein>
<accession>Q00740</accession>
<sequence length="338" mass="36672">MNLQRFPRYPLTFGPTPIQPLARLSKHLGGKVHLYAKREDCNSGLAFGGNKTRKLEYLIPEALAQGCDTLVSIGGIQSNQTRQVAAVAAHLGMKCVLVQENWVNYSDAVYDRVGNIQMSRILGADVRLVPDGFDIGFRRSWEDALESVRAAGGKPYAIPAGCSDHPLGGLGFVGFAEEVRAQEAELGFKFDYVVVCSVTGSTQAGMVVGFAADGRADRVIGVDASAKPAQTREQITRIARQTAEKVGLERDIMRADVVLDERFAGPEYGLPNEGTLEAIRLCARTEGMLTDPVYEGKSMHGMIEMVRNGEFPEGSRVLYAHLGGVPALNGYSFIFRDG</sequence>
<comment type="function">
    <text evidence="1 2">Catalyzes a cyclopropane ring-opening reaction, the irreversible conversion of 1-aminocyclopropane-1-carboxylate (ACC) to ammonia and alpha-ketobutyrate. Allows growth on ACC as a nitrogen source.</text>
</comment>
<comment type="catalytic activity">
    <reaction evidence="1 2">
        <text>1-aminocyclopropane-1-carboxylate + H2O = 2-oxobutanoate + NH4(+)</text>
        <dbReference type="Rhea" id="RHEA:16933"/>
        <dbReference type="ChEBI" id="CHEBI:15377"/>
        <dbReference type="ChEBI" id="CHEBI:16763"/>
        <dbReference type="ChEBI" id="CHEBI:28938"/>
        <dbReference type="ChEBI" id="CHEBI:58360"/>
        <dbReference type="EC" id="3.5.99.7"/>
    </reaction>
</comment>
<comment type="cofactor">
    <cofactor evidence="1 2">
        <name>pyridoxal 5'-phosphate</name>
        <dbReference type="ChEBI" id="CHEBI:597326"/>
    </cofactor>
</comment>
<comment type="subunit">
    <text evidence="1">Homotrimer.</text>
</comment>
<comment type="similarity">
    <text evidence="1">Belongs to the ACC deaminase/D-cysteine desulfhydrase family.</text>
</comment>
<reference key="1">
    <citation type="journal article" date="1991" name="J. Bacteriol.">
        <title>Isolation, sequence, and expression in Escherichia coli of the Pseudomonas sp. strain ACP gene encoding 1-aminocyclopropane-1-carboxylate deaminase.</title>
        <authorList>
            <person name="Sheehy R.E."/>
            <person name="Honma M."/>
            <person name="Yamada M."/>
            <person name="Sasaki T."/>
            <person name="Martineau B."/>
            <person name="Hiatt W.R."/>
        </authorList>
    </citation>
    <scope>NUCLEOTIDE SEQUENCE [GENOMIC DNA]</scope>
    <scope>PROTEIN SEQUENCE</scope>
    <scope>FUNCTION</scope>
    <scope>CATALYTIC ACTIVITY</scope>
    <scope>COFACTOR</scope>
</reference>
<name>1A1D_PSEUD</name>
<dbReference type="EC" id="3.5.99.7" evidence="1"/>
<dbReference type="EMBL" id="M73488">
    <property type="protein sequence ID" value="AAA25689.1"/>
    <property type="molecule type" value="Genomic_DNA"/>
</dbReference>
<dbReference type="PDB" id="1RQX">
    <property type="method" value="X-ray"/>
    <property type="resolution" value="2.50 A"/>
    <property type="chains" value="A/B/C/D=1-338"/>
</dbReference>
<dbReference type="PDB" id="1TYZ">
    <property type="method" value="X-ray"/>
    <property type="resolution" value="2.00 A"/>
    <property type="chains" value="A/B/C/D=1-338"/>
</dbReference>
<dbReference type="PDB" id="1TZ2">
    <property type="method" value="X-ray"/>
    <property type="resolution" value="2.10 A"/>
    <property type="chains" value="A/B/C/D=1-338"/>
</dbReference>
<dbReference type="PDB" id="1TZJ">
    <property type="method" value="X-ray"/>
    <property type="resolution" value="1.99 A"/>
    <property type="chains" value="A/B/C/D=1-338"/>
</dbReference>
<dbReference type="PDB" id="1TZK">
    <property type="method" value="X-ray"/>
    <property type="resolution" value="2.00 A"/>
    <property type="chains" value="A/B/C/D=1-338"/>
</dbReference>
<dbReference type="PDB" id="1TZM">
    <property type="method" value="X-ray"/>
    <property type="resolution" value="2.08 A"/>
    <property type="chains" value="A/B/C/D=1-338"/>
</dbReference>
<dbReference type="PDBsum" id="1RQX"/>
<dbReference type="PDBsum" id="1TYZ"/>
<dbReference type="PDBsum" id="1TZ2"/>
<dbReference type="PDBsum" id="1TZJ"/>
<dbReference type="PDBsum" id="1TZK"/>
<dbReference type="PDBsum" id="1TZM"/>
<dbReference type="SMR" id="Q00740"/>
<dbReference type="DrugBank" id="DB02085">
    <property type="generic name" value="1-Aminocyclopropanecarboxylic Acid"/>
</dbReference>
<dbReference type="DrugBank" id="DB03053">
    <property type="generic name" value="1-Aminocyclopropylphosphonate"/>
</dbReference>
<dbReference type="DrugBank" id="DB01804">
    <property type="generic name" value="2-Ammoniobut-3-Enoate, 2-Amino-3-Butenoate"/>
</dbReference>
<dbReference type="DrugBank" id="DB04212">
    <property type="generic name" value="2-Iminiopropanoate"/>
</dbReference>
<dbReference type="DrugBank" id="DB04553">
    <property type="generic name" value="2-Oxobutanoic Acid"/>
</dbReference>
<dbReference type="DrugBank" id="DB01735">
    <property type="generic name" value="3-Chloroalaninate"/>
</dbReference>
<dbReference type="BRENDA" id="3.5.99.7">
    <property type="organism ID" value="5085"/>
</dbReference>
<dbReference type="EvolutionaryTrace" id="Q00740"/>
<dbReference type="GO" id="GO:0008660">
    <property type="term" value="F:1-aminocyclopropane-1-carboxylate deaminase activity"/>
    <property type="evidence" value="ECO:0007669"/>
    <property type="project" value="UniProtKB-UniRule"/>
</dbReference>
<dbReference type="GO" id="GO:0019148">
    <property type="term" value="F:D-cysteine desulfhydrase activity"/>
    <property type="evidence" value="ECO:0007669"/>
    <property type="project" value="TreeGrafter"/>
</dbReference>
<dbReference type="GO" id="GO:0030170">
    <property type="term" value="F:pyridoxal phosphate binding"/>
    <property type="evidence" value="ECO:0007669"/>
    <property type="project" value="InterPro"/>
</dbReference>
<dbReference type="GO" id="GO:0018871">
    <property type="term" value="P:1-aminocyclopropane-1-carboxylate metabolic process"/>
    <property type="evidence" value="ECO:0007669"/>
    <property type="project" value="UniProtKB-UniRule"/>
</dbReference>
<dbReference type="GO" id="GO:0009310">
    <property type="term" value="P:amine catabolic process"/>
    <property type="evidence" value="ECO:0007669"/>
    <property type="project" value="InterPro"/>
</dbReference>
<dbReference type="CDD" id="cd06449">
    <property type="entry name" value="ACCD"/>
    <property type="match status" value="1"/>
</dbReference>
<dbReference type="FunFam" id="3.40.50.1100:FF:000053">
    <property type="entry name" value="1-aminocyclopropane-1-carboxylate deaminase"/>
    <property type="match status" value="1"/>
</dbReference>
<dbReference type="Gene3D" id="3.40.50.1100">
    <property type="match status" value="2"/>
</dbReference>
<dbReference type="HAMAP" id="MF_00807">
    <property type="entry name" value="ACC_deaminase"/>
    <property type="match status" value="1"/>
</dbReference>
<dbReference type="InterPro" id="IPR027278">
    <property type="entry name" value="ACCD_DCysDesulf"/>
</dbReference>
<dbReference type="InterPro" id="IPR005965">
    <property type="entry name" value="ACP_carboxylate_deaminase"/>
</dbReference>
<dbReference type="InterPro" id="IPR020601">
    <property type="entry name" value="ACP_carboxylate_deaminase_bac"/>
</dbReference>
<dbReference type="InterPro" id="IPR001926">
    <property type="entry name" value="TrpB-like_PALP"/>
</dbReference>
<dbReference type="InterPro" id="IPR036052">
    <property type="entry name" value="TrpB-like_PALP_sf"/>
</dbReference>
<dbReference type="NCBIfam" id="TIGR01274">
    <property type="entry name" value="ACC_deam"/>
    <property type="match status" value="1"/>
</dbReference>
<dbReference type="PANTHER" id="PTHR43780">
    <property type="entry name" value="1-AMINOCYCLOPROPANE-1-CARBOXYLATE DEAMINASE-RELATED"/>
    <property type="match status" value="1"/>
</dbReference>
<dbReference type="PANTHER" id="PTHR43780:SF2">
    <property type="entry name" value="1-AMINOCYCLOPROPANE-1-CARBOXYLATE DEAMINASE-RELATED"/>
    <property type="match status" value="1"/>
</dbReference>
<dbReference type="Pfam" id="PF00291">
    <property type="entry name" value="PALP"/>
    <property type="match status" value="1"/>
</dbReference>
<dbReference type="PIRSF" id="PIRSF006278">
    <property type="entry name" value="ACCD_DCysDesulf"/>
    <property type="match status" value="1"/>
</dbReference>
<dbReference type="SUPFAM" id="SSF53686">
    <property type="entry name" value="Tryptophan synthase beta subunit-like PLP-dependent enzymes"/>
    <property type="match status" value="1"/>
</dbReference>
<evidence type="ECO:0000255" key="1">
    <source>
        <dbReference type="HAMAP-Rule" id="MF_00807"/>
    </source>
</evidence>
<evidence type="ECO:0000269" key="2">
    <source>
    </source>
</evidence>
<evidence type="ECO:0007829" key="3">
    <source>
        <dbReference type="PDB" id="1TZJ"/>
    </source>
</evidence>
<gene>
    <name evidence="1" type="primary">acdS</name>
</gene>
<keyword id="KW-0002">3D-structure</keyword>
<keyword id="KW-0903">Direct protein sequencing</keyword>
<keyword id="KW-0378">Hydrolase</keyword>
<keyword id="KW-0663">Pyridoxal phosphate</keyword>